<comment type="function">
    <text evidence="1">Part of the Sec protein translocase complex. Interacts with the SecYEG preprotein conducting channel. Has a central role in coupling the hydrolysis of ATP to the transfer of proteins into and across the cell membrane, serving as an ATP-driven molecular motor driving the stepwise translocation of polypeptide chains across the membrane.</text>
</comment>
<comment type="catalytic activity">
    <reaction evidence="1">
        <text>ATP + H2O + cellular proteinSide 1 = ADP + phosphate + cellular proteinSide 2.</text>
        <dbReference type="EC" id="7.4.2.8"/>
    </reaction>
</comment>
<comment type="subunit">
    <text evidence="1">Monomer and homodimer. Part of the essential Sec protein translocation apparatus which comprises SecA, SecYEG and auxiliary proteins SecDF. Other proteins may also be involved.</text>
</comment>
<comment type="subcellular location">
    <subcellularLocation>
        <location evidence="1">Cell membrane</location>
        <topology evidence="1">Peripheral membrane protein</topology>
        <orientation evidence="1">Cytoplasmic side</orientation>
    </subcellularLocation>
    <subcellularLocation>
        <location evidence="1">Cytoplasm</location>
    </subcellularLocation>
    <text evidence="1">Distribution is 50-50.</text>
</comment>
<comment type="similarity">
    <text evidence="1">Belongs to the SecA family.</text>
</comment>
<comment type="sequence caution" evidence="3">
    <conflict type="erroneous initiation">
        <sequence resource="EMBL-CDS" id="AAV27504"/>
    </conflict>
    <text>Extended N-terminus.</text>
</comment>
<keyword id="KW-0067">ATP-binding</keyword>
<keyword id="KW-1003">Cell membrane</keyword>
<keyword id="KW-0963">Cytoplasm</keyword>
<keyword id="KW-0472">Membrane</keyword>
<keyword id="KW-0547">Nucleotide-binding</keyword>
<keyword id="KW-0653">Protein transport</keyword>
<keyword id="KW-1278">Translocase</keyword>
<keyword id="KW-0811">Translocation</keyword>
<keyword id="KW-0813">Transport</keyword>
<organism>
    <name type="scientific">Mesomycoplasma hyopneumoniae (strain 232)</name>
    <name type="common">Mycoplasma hyopneumoniae</name>
    <dbReference type="NCBI Taxonomy" id="295358"/>
    <lineage>
        <taxon>Bacteria</taxon>
        <taxon>Bacillati</taxon>
        <taxon>Mycoplasmatota</taxon>
        <taxon>Mycoplasmoidales</taxon>
        <taxon>Metamycoplasmataceae</taxon>
        <taxon>Mesomycoplasma</taxon>
    </lineage>
</organism>
<feature type="chain" id="PRO_0000320854" description="Protein translocase subunit SecA">
    <location>
        <begin position="1"/>
        <end position="983"/>
    </location>
</feature>
<feature type="region of interest" description="Disordered" evidence="2">
    <location>
        <begin position="948"/>
        <end position="983"/>
    </location>
</feature>
<feature type="compositionally biased region" description="Polar residues" evidence="2">
    <location>
        <begin position="973"/>
        <end position="983"/>
    </location>
</feature>
<feature type="binding site" evidence="1">
    <location>
        <position position="83"/>
    </location>
    <ligand>
        <name>ATP</name>
        <dbReference type="ChEBI" id="CHEBI:30616"/>
    </ligand>
</feature>
<feature type="binding site" evidence="1">
    <location>
        <begin position="101"/>
        <end position="105"/>
    </location>
    <ligand>
        <name>ATP</name>
        <dbReference type="ChEBI" id="CHEBI:30616"/>
    </ligand>
</feature>
<feature type="binding site" evidence="1">
    <location>
        <position position="489"/>
    </location>
    <ligand>
        <name>ATP</name>
        <dbReference type="ChEBI" id="CHEBI:30616"/>
    </ligand>
</feature>
<proteinExistence type="inferred from homology"/>
<protein>
    <recommendedName>
        <fullName evidence="1">Protein translocase subunit SecA</fullName>
        <ecNumber evidence="1">7.4.2.8</ecNumber>
    </recommendedName>
</protein>
<dbReference type="EC" id="7.4.2.8" evidence="1"/>
<dbReference type="EMBL" id="AE017332">
    <property type="protein sequence ID" value="AAV27504.1"/>
    <property type="status" value="ALT_INIT"/>
    <property type="molecule type" value="Genomic_DNA"/>
</dbReference>
<dbReference type="RefSeq" id="WP_011206132.1">
    <property type="nucleotide sequence ID" value="NC_006360.1"/>
</dbReference>
<dbReference type="SMR" id="Q601A7"/>
<dbReference type="KEGG" id="mhy:mhp295"/>
<dbReference type="eggNOG" id="COG0653">
    <property type="taxonomic scope" value="Bacteria"/>
</dbReference>
<dbReference type="HOGENOM" id="CLU_005314_3_0_14"/>
<dbReference type="Proteomes" id="UP000006822">
    <property type="component" value="Chromosome"/>
</dbReference>
<dbReference type="GO" id="GO:0031522">
    <property type="term" value="C:cell envelope Sec protein transport complex"/>
    <property type="evidence" value="ECO:0007669"/>
    <property type="project" value="TreeGrafter"/>
</dbReference>
<dbReference type="GO" id="GO:0005829">
    <property type="term" value="C:cytosol"/>
    <property type="evidence" value="ECO:0007669"/>
    <property type="project" value="TreeGrafter"/>
</dbReference>
<dbReference type="GO" id="GO:0005886">
    <property type="term" value="C:plasma membrane"/>
    <property type="evidence" value="ECO:0007669"/>
    <property type="project" value="UniProtKB-SubCell"/>
</dbReference>
<dbReference type="GO" id="GO:0005524">
    <property type="term" value="F:ATP binding"/>
    <property type="evidence" value="ECO:0007669"/>
    <property type="project" value="UniProtKB-UniRule"/>
</dbReference>
<dbReference type="GO" id="GO:0008564">
    <property type="term" value="F:protein-exporting ATPase activity"/>
    <property type="evidence" value="ECO:0007669"/>
    <property type="project" value="UniProtKB-EC"/>
</dbReference>
<dbReference type="GO" id="GO:0065002">
    <property type="term" value="P:intracellular protein transmembrane transport"/>
    <property type="evidence" value="ECO:0007669"/>
    <property type="project" value="UniProtKB-UniRule"/>
</dbReference>
<dbReference type="GO" id="GO:0017038">
    <property type="term" value="P:protein import"/>
    <property type="evidence" value="ECO:0007669"/>
    <property type="project" value="InterPro"/>
</dbReference>
<dbReference type="GO" id="GO:0006605">
    <property type="term" value="P:protein targeting"/>
    <property type="evidence" value="ECO:0007669"/>
    <property type="project" value="UniProtKB-UniRule"/>
</dbReference>
<dbReference type="GO" id="GO:0043952">
    <property type="term" value="P:protein transport by the Sec complex"/>
    <property type="evidence" value="ECO:0007669"/>
    <property type="project" value="TreeGrafter"/>
</dbReference>
<dbReference type="CDD" id="cd17928">
    <property type="entry name" value="DEXDc_SecA"/>
    <property type="match status" value="1"/>
</dbReference>
<dbReference type="CDD" id="cd18803">
    <property type="entry name" value="SF2_C_secA"/>
    <property type="match status" value="1"/>
</dbReference>
<dbReference type="FunFam" id="3.40.50.300:FF:000429">
    <property type="entry name" value="Preprotein translocase subunit SecA"/>
    <property type="match status" value="1"/>
</dbReference>
<dbReference type="Gene3D" id="1.10.3060.10">
    <property type="entry name" value="Helical scaffold and wing domains of SecA"/>
    <property type="match status" value="1"/>
</dbReference>
<dbReference type="Gene3D" id="3.40.50.300">
    <property type="entry name" value="P-loop containing nucleotide triphosphate hydrolases"/>
    <property type="match status" value="3"/>
</dbReference>
<dbReference type="Gene3D" id="3.90.1440.10">
    <property type="entry name" value="SecA, preprotein cross-linking domain"/>
    <property type="match status" value="1"/>
</dbReference>
<dbReference type="HAMAP" id="MF_01382">
    <property type="entry name" value="SecA"/>
    <property type="match status" value="1"/>
</dbReference>
<dbReference type="InterPro" id="IPR014001">
    <property type="entry name" value="Helicase_ATP-bd"/>
</dbReference>
<dbReference type="InterPro" id="IPR001650">
    <property type="entry name" value="Helicase_C-like"/>
</dbReference>
<dbReference type="InterPro" id="IPR027417">
    <property type="entry name" value="P-loop_NTPase"/>
</dbReference>
<dbReference type="InterPro" id="IPR000185">
    <property type="entry name" value="SecA"/>
</dbReference>
<dbReference type="InterPro" id="IPR020937">
    <property type="entry name" value="SecA_CS"/>
</dbReference>
<dbReference type="InterPro" id="IPR011115">
    <property type="entry name" value="SecA_DEAD"/>
</dbReference>
<dbReference type="InterPro" id="IPR014018">
    <property type="entry name" value="SecA_motor_DEAD"/>
</dbReference>
<dbReference type="InterPro" id="IPR011130">
    <property type="entry name" value="SecA_preprotein_X-link_dom"/>
</dbReference>
<dbReference type="InterPro" id="IPR044722">
    <property type="entry name" value="SecA_SF2_C"/>
</dbReference>
<dbReference type="InterPro" id="IPR011116">
    <property type="entry name" value="SecA_Wing/Scaffold"/>
</dbReference>
<dbReference type="InterPro" id="IPR036266">
    <property type="entry name" value="SecA_Wing/Scaffold_sf"/>
</dbReference>
<dbReference type="InterPro" id="IPR036670">
    <property type="entry name" value="SecA_X-link_sf"/>
</dbReference>
<dbReference type="NCBIfam" id="NF006630">
    <property type="entry name" value="PRK09200.1"/>
    <property type="match status" value="1"/>
</dbReference>
<dbReference type="NCBIfam" id="TIGR00963">
    <property type="entry name" value="secA"/>
    <property type="match status" value="1"/>
</dbReference>
<dbReference type="PANTHER" id="PTHR30612:SF0">
    <property type="entry name" value="CHLOROPLAST PROTEIN-TRANSPORTING ATPASE"/>
    <property type="match status" value="1"/>
</dbReference>
<dbReference type="PANTHER" id="PTHR30612">
    <property type="entry name" value="SECA INNER MEMBRANE COMPONENT OF SEC PROTEIN SECRETION SYSTEM"/>
    <property type="match status" value="1"/>
</dbReference>
<dbReference type="Pfam" id="PF21090">
    <property type="entry name" value="P-loop_SecA"/>
    <property type="match status" value="2"/>
</dbReference>
<dbReference type="Pfam" id="PF07517">
    <property type="entry name" value="SecA_DEAD"/>
    <property type="match status" value="1"/>
</dbReference>
<dbReference type="Pfam" id="PF01043">
    <property type="entry name" value="SecA_PP_bind"/>
    <property type="match status" value="1"/>
</dbReference>
<dbReference type="Pfam" id="PF07516">
    <property type="entry name" value="SecA_SW"/>
    <property type="match status" value="1"/>
</dbReference>
<dbReference type="PRINTS" id="PR00906">
    <property type="entry name" value="SECA"/>
</dbReference>
<dbReference type="SMART" id="SM00957">
    <property type="entry name" value="SecA_DEAD"/>
    <property type="match status" value="1"/>
</dbReference>
<dbReference type="SMART" id="SM00958">
    <property type="entry name" value="SecA_PP_bind"/>
    <property type="match status" value="1"/>
</dbReference>
<dbReference type="SUPFAM" id="SSF81886">
    <property type="entry name" value="Helical scaffold and wing domains of SecA"/>
    <property type="match status" value="1"/>
</dbReference>
<dbReference type="SUPFAM" id="SSF52540">
    <property type="entry name" value="P-loop containing nucleoside triphosphate hydrolases"/>
    <property type="match status" value="2"/>
</dbReference>
<dbReference type="SUPFAM" id="SSF81767">
    <property type="entry name" value="Pre-protein crosslinking domain of SecA"/>
    <property type="match status" value="1"/>
</dbReference>
<dbReference type="PROSITE" id="PS01312">
    <property type="entry name" value="SECA"/>
    <property type="match status" value="1"/>
</dbReference>
<dbReference type="PROSITE" id="PS51196">
    <property type="entry name" value="SECA_MOTOR_DEAD"/>
    <property type="match status" value="1"/>
</dbReference>
<evidence type="ECO:0000255" key="1">
    <source>
        <dbReference type="HAMAP-Rule" id="MF_01382"/>
    </source>
</evidence>
<evidence type="ECO:0000256" key="2">
    <source>
        <dbReference type="SAM" id="MobiDB-lite"/>
    </source>
</evidence>
<evidence type="ECO:0000305" key="3"/>
<sequence>MKNLFNFFKTSSELRLAYRLLKQINQKRSFYGAMTDFDLANQTNIFKKRLANGEKLKDIRVDAFAVAREATKRILGKTPYDVQILGGLILDMGSVAEMKTGEGKTIASIPPVYLNALLGQGVIVSTVNEYLAERDAEDNGKVYNFLGLTVGINKTEMDANTKRMMYNADITYSVHSELGFDYLRDNMVFSAAEKVQRGLNFCLIDEVDSILIDEAKTPLIISGGKTNLPAQYLSANQFVNTLIAEDFYIDEETKGIKLNDKGIDKANAFFGLRNLYEIQNSEIVHRIQNALRANKVMKRDVEYIVQDGKIALVDQFTGRIMAGRSYSEGLQQALQAKEGLEIEPETKTLATITYQNFFRLFKKLSGMTGTAKTEEQEFIDVYNMRVNVIPTNKPMIRKDERDEIFATSHEKNQAIISEVERVHKRGQPILIGTSQVVDSETLSEMLNQKGLYHTVLNAKQNQLEAEIIAKAGRKNAITIATNMAGRGTDIILEPGVTELGGLYILGTDKAEARRIDNQLRGRSGRQGDVGISRFFISLQDQLFRRFTNFDQIFGAYGQTNGAIKGKYIHAVLLAAQKKIEGFNFDMRKTVLSYDDVIRQQRDLIYAQRDILLQIENFDHYIQKMIIRAVDIILNYDFIILPNQEIHYKNLINFLNDNLSRITHFNFGQIGIENYPIEQLNEFLIKQLETIYFKQIQSVLKENLGKTYFESERYIILSTLDSQWQNHIDTIDKLRSSANLVQYSQKNPYQIFTEEATKKFNILVAESAYQAIVSLFNNSNAEKIEYIKAILSDGTAISYPADSPQEIIDQIIASNEERIAAARKAKEEKQPEFIEKQLAKLKIEKVESGEEFELWKIGDSKLVNLKKEMPLDEKQNILVKMQQEQLEMMSEEEKNLIQEQNLEIVEIEEIEEEIQNENPQKVEFVDFKNDPDAYNKLIFGADYADKQLISSEEEDNNEKTNINNNEDLERTKGEAQQTAKNPNE</sequence>
<reference key="1">
    <citation type="journal article" date="2004" name="J. Bacteriol.">
        <title>The genome sequence of Mycoplasma hyopneumoniae strain 232, the agent of swine mycoplasmosis.</title>
        <authorList>
            <person name="Minion F.C."/>
            <person name="Lefkowitz E.J."/>
            <person name="Madsen M.L."/>
            <person name="Cleary B.J."/>
            <person name="Swartzell S.M."/>
            <person name="Mahairas G.G."/>
        </authorList>
    </citation>
    <scope>NUCLEOTIDE SEQUENCE [LARGE SCALE GENOMIC DNA]</scope>
    <source>
        <strain>232</strain>
    </source>
</reference>
<accession>Q601A7</accession>
<gene>
    <name evidence="1" type="primary">secA</name>
    <name type="ordered locus">mhp295</name>
</gene>
<name>SECA_MESH2</name>